<keyword id="KW-0025">Alternative splicing</keyword>
<keyword id="KW-1048">Host nucleus</keyword>
<keyword id="KW-0472">Membrane</keyword>
<keyword id="KW-0694">RNA-binding</keyword>
<keyword id="KW-0468">Viral matrix protein</keyword>
<keyword id="KW-0946">Virion</keyword>
<organism>
    <name type="scientific">Influenza A virus (strain A/Ann Arbor/6/1960 H2N2)</name>
    <dbReference type="NCBI Taxonomy" id="384498"/>
    <lineage>
        <taxon>Viruses</taxon>
        <taxon>Riboviria</taxon>
        <taxon>Orthornavirae</taxon>
        <taxon>Negarnaviricota</taxon>
        <taxon>Polyploviricotina</taxon>
        <taxon>Insthoviricetes</taxon>
        <taxon>Articulavirales</taxon>
        <taxon>Orthomyxoviridae</taxon>
        <taxon>Alphainfluenzavirus</taxon>
        <taxon>Alphainfluenzavirus influenzae</taxon>
        <taxon>Influenza A virus</taxon>
    </lineage>
</organism>
<dbReference type="EMBL" id="M23978">
    <property type="protein sequence ID" value="AAA43256.1"/>
    <property type="molecule type" value="Genomic_RNA"/>
</dbReference>
<dbReference type="PIR" id="E31831">
    <property type="entry name" value="MFIV61"/>
</dbReference>
<dbReference type="SMR" id="P21429"/>
<dbReference type="GO" id="GO:0042025">
    <property type="term" value="C:host cell nucleus"/>
    <property type="evidence" value="ECO:0007669"/>
    <property type="project" value="UniProtKB-SubCell"/>
</dbReference>
<dbReference type="GO" id="GO:0016020">
    <property type="term" value="C:membrane"/>
    <property type="evidence" value="ECO:0007669"/>
    <property type="project" value="UniProtKB-KW"/>
</dbReference>
<dbReference type="GO" id="GO:0055036">
    <property type="term" value="C:virion membrane"/>
    <property type="evidence" value="ECO:0007669"/>
    <property type="project" value="UniProtKB-SubCell"/>
</dbReference>
<dbReference type="GO" id="GO:0003723">
    <property type="term" value="F:RNA binding"/>
    <property type="evidence" value="ECO:0007669"/>
    <property type="project" value="UniProtKB-UniRule"/>
</dbReference>
<dbReference type="GO" id="GO:0039660">
    <property type="term" value="F:structural constituent of virion"/>
    <property type="evidence" value="ECO:0007669"/>
    <property type="project" value="UniProtKB-UniRule"/>
</dbReference>
<dbReference type="GO" id="GO:0046761">
    <property type="term" value="P:viral budding from plasma membrane"/>
    <property type="evidence" value="ECO:0007669"/>
    <property type="project" value="UniProtKB-UniRule"/>
</dbReference>
<dbReference type="FunFam" id="1.10.10.180:FF:000001">
    <property type="entry name" value="Matrix protein 1"/>
    <property type="match status" value="1"/>
</dbReference>
<dbReference type="FunFam" id="1.20.91.10:FF:000001">
    <property type="entry name" value="Matrix protein 1"/>
    <property type="match status" value="1"/>
</dbReference>
<dbReference type="Gene3D" id="1.10.10.180">
    <property type="match status" value="1"/>
</dbReference>
<dbReference type="Gene3D" id="1.20.91.10">
    <property type="match status" value="1"/>
</dbReference>
<dbReference type="HAMAP" id="MF_04068">
    <property type="entry name" value="INFV_M1"/>
    <property type="match status" value="1"/>
</dbReference>
<dbReference type="InterPro" id="IPR036039">
    <property type="entry name" value="Flu_matrix_M1"/>
</dbReference>
<dbReference type="InterPro" id="IPR013188">
    <property type="entry name" value="Flu_matrix_M1_C"/>
</dbReference>
<dbReference type="InterPro" id="IPR001561">
    <property type="entry name" value="Flu_matrix_M1_N"/>
</dbReference>
<dbReference type="InterPro" id="IPR015423">
    <property type="entry name" value="Flu_matrix_M1_N_sub1"/>
</dbReference>
<dbReference type="InterPro" id="IPR015799">
    <property type="entry name" value="Flu_matrix_M1_N_sub2"/>
</dbReference>
<dbReference type="InterPro" id="IPR037533">
    <property type="entry name" value="INFV_M1"/>
</dbReference>
<dbReference type="Pfam" id="PF00598">
    <property type="entry name" value="Flu_M1"/>
    <property type="match status" value="1"/>
</dbReference>
<dbReference type="Pfam" id="PF08289">
    <property type="entry name" value="Flu_M1_C"/>
    <property type="match status" value="1"/>
</dbReference>
<dbReference type="SMART" id="SM00759">
    <property type="entry name" value="Flu_M1_C"/>
    <property type="match status" value="1"/>
</dbReference>
<dbReference type="SUPFAM" id="SSF48145">
    <property type="entry name" value="Influenza virus matrix protein M1"/>
    <property type="match status" value="1"/>
</dbReference>
<accession>P21429</accession>
<feature type="chain" id="PRO_0000078850" description="Matrix protein 1">
    <location>
        <begin position="1"/>
        <end position="252"/>
    </location>
</feature>
<feature type="region of interest" description="Membrane-binding" evidence="1">
    <location>
        <begin position="1"/>
        <end position="164"/>
    </location>
</feature>
<feature type="region of interest" description="RNP-binding" evidence="1">
    <location>
        <begin position="165"/>
        <end position="252"/>
    </location>
</feature>
<feature type="short sequence motif" description="Nuclear localization signal" evidence="1">
    <location>
        <begin position="101"/>
        <end position="105"/>
    </location>
</feature>
<name>M1_I60A0</name>
<reference key="1">
    <citation type="journal article" date="1988" name="Virology">
        <title>Identification of sequence changes in the cold-adapted, live attenuated influenza vaccine strain, A/Ann Arbor/6/60 (H2N2).</title>
        <authorList>
            <person name="Cox N.J."/>
            <person name="Kitame F."/>
            <person name="Kendal A.P."/>
            <person name="Maassab H.F."/>
            <person name="Naeve C."/>
        </authorList>
    </citation>
    <scope>NUCLEOTIDE SEQUENCE [GENOMIC RNA]</scope>
</reference>
<evidence type="ECO:0000255" key="1">
    <source>
        <dbReference type="HAMAP-Rule" id="MF_04068"/>
    </source>
</evidence>
<proteinExistence type="inferred from homology"/>
<protein>
    <recommendedName>
        <fullName evidence="1">Matrix protein 1</fullName>
        <shortName evidence="1">M1</shortName>
    </recommendedName>
</protein>
<organismHost>
    <name type="scientific">Aves</name>
    <dbReference type="NCBI Taxonomy" id="8782"/>
</organismHost>
<organismHost>
    <name type="scientific">Homo sapiens</name>
    <name type="common">Human</name>
    <dbReference type="NCBI Taxonomy" id="9606"/>
</organismHost>
<gene>
    <name evidence="1" type="primary">M</name>
</gene>
<sequence>MSLLTEVETYVLSIIPSGPLKAEIAQRLEDVFAGKNTDLEALMEWLKTRPILSPLTKGILGFVFTLTVPSERGLQRRRFVQNALNGNGDPNNMDRAVKLYRKLKREITFHGAKEIALSYSAGALASCMGLIYNRMGAVTTEVVLGLVCATCEQIADSQHRSHRQMVTTTNPLIRHENRMVLASTTAKAMEQMAGSSEQAAEAMEVASQARQMVQAMRVIGTHPSSSAGLKNDLLENLQAYQKRMGVQMQRFK</sequence>
<comment type="function">
    <text evidence="1">Plays critical roles in virus replication, from virus entry and uncoating to assembly and budding of the virus particle. M1 binding to ribonucleocapsids (RNPs) in nucleus seems to inhibit viral transcription. Interaction of viral NEP with M1-RNP is thought to promote nuclear export of the complex, which is targeted to the virion assembly site at the apical plasma membrane in polarized epithelial cells. Interactions with NA and HA may bring M1, a non-raft-associated protein, into lipid rafts. Forms a continuous shell on the inner side of the lipid bilayer in virion, where it binds the RNP. During virus entry into cell, the M2 ion channel acidifies the internal virion core, inducing M1 dissociation from the RNP. M1-free RNPs are transported to the nucleus, where viral transcription and replication can take place.</text>
</comment>
<comment type="function">
    <text evidence="1">Determines the virion's shape: spherical or filamentous. Clinical isolates of influenza are characterized by the presence of significant proportion of filamentous virions, whereas after multiple passage on eggs or cell culture, virions have only spherical morphology. Filamentous virions are thought to be important to infect neighboring cells, and spherical virions more suited to spread through aerosol between hosts organisms.</text>
</comment>
<comment type="subunit">
    <text evidence="1">Homodimer and homomultimer. Interacts with NEP. Binds ribonucleocapsid by both interacting with genomic RNA and NP protein. May interact with HA and NA. Cannot bind NP without genomic RNA.</text>
</comment>
<comment type="subcellular location">
    <subcellularLocation>
        <location evidence="1">Virion membrane</location>
        <topology evidence="1">Peripheral membrane protein</topology>
        <orientation evidence="1">Cytoplasmic side</orientation>
    </subcellularLocation>
    <subcellularLocation>
        <location evidence="1">Host nucleus</location>
    </subcellularLocation>
</comment>
<comment type="alternative products">
    <event type="alternative splicing"/>
    <isoform>
        <id>P21429-1</id>
        <name>M1</name>
        <sequence type="displayed"/>
    </isoform>
    <isoform>
        <id>P21430-1</id>
        <name>M2</name>
        <sequence type="external"/>
    </isoform>
    <text>Only the first 9 residues are shared by the 2 isoforms.</text>
</comment>
<comment type="miscellaneous">
    <text evidence="1">Most abundant protein in virion. When expressed alone can form virus-like particles in transfected cells.</text>
</comment>
<comment type="similarity">
    <text evidence="1">Belongs to the influenza viruses Matrix protein M1 family.</text>
</comment>